<gene>
    <name type="primary">F3</name>
</gene>
<protein>
    <recommendedName>
        <fullName>Tissue factor</fullName>
        <shortName>TF</shortName>
    </recommendedName>
    <alternativeName>
        <fullName>Coagulation factor III</fullName>
    </alternativeName>
    <alternativeName>
        <fullName>Thromboplastin</fullName>
    </alternativeName>
    <cdAntigenName>CD142</cdAntigenName>
</protein>
<proteinExistence type="evidence at protein level"/>
<name>TF_HUMAN</name>
<reference key="1">
    <citation type="journal article" date="1987" name="Biochemistry">
        <title>Human tissue factor: cDNA sequence and chromosome localization of the gene.</title>
        <authorList>
            <person name="Scarpati E.M."/>
            <person name="Wen D."/>
            <person name="Broze G.J. Jr."/>
            <person name="Miletich J.P."/>
            <person name="Flandermeyer R.R."/>
            <person name="Siegel N.R."/>
            <person name="Sadler J.E."/>
        </authorList>
    </citation>
    <scope>NUCLEOTIDE SEQUENCE [MRNA] (ISOFORM 1)</scope>
</reference>
<reference key="2">
    <citation type="journal article" date="1987" name="Cell">
        <title>Molecular cloning of the cDNA for tissue factor, the cellular receptor for the initiation of the coagulation protease cascade.</title>
        <authorList>
            <person name="Morrissey J.H."/>
            <person name="Fakhrai H."/>
            <person name="Edgington T.S."/>
        </authorList>
    </citation>
    <scope>NUCLEOTIDE SEQUENCE [MRNA] (ISOFORM 1)</scope>
</reference>
<reference key="3">
    <citation type="journal article" date="1987" name="Proc. Natl. Acad. Sci. U.S.A.">
        <title>Isolation of cDNA clones coding for human tissue factor: primary structure of the protein and cDNA.</title>
        <authorList>
            <person name="Spicer E.K."/>
            <person name="Horton R."/>
            <person name="Bloem L."/>
            <person name="Bach R."/>
            <person name="Williams K.R."/>
            <person name="Guha A."/>
            <person name="Kraus J."/>
            <person name="Lin T.C."/>
            <person name="Nemerson Y."/>
            <person name="Konigsberg W.H."/>
        </authorList>
    </citation>
    <scope>NUCLEOTIDE SEQUENCE [MRNA] (ISOFORM 1)</scope>
</reference>
<reference key="4">
    <citation type="journal article" date="1987" name="Thromb. Res.">
        <title>Cloning and expression of human tissue factor cDNA.</title>
        <authorList>
            <person name="Fisher K.L."/>
            <person name="Gorman C.M."/>
            <person name="Vehar G.A."/>
            <person name="O'Brien D.P."/>
            <person name="Lawn R.M."/>
        </authorList>
    </citation>
    <scope>NUCLEOTIDE SEQUENCE [MRNA] (ISOFORM 1)</scope>
</reference>
<reference key="5">
    <citation type="journal article" date="1989" name="Biochemistry">
        <title>Complete sequence of the human tissue factor gene, a highly regulated cellular receptor that initiates the coagulation protease cascade.</title>
        <authorList>
            <person name="Mackman N."/>
            <person name="Morrissey J.H."/>
            <person name="Fowler B."/>
            <person name="Edgington T.S."/>
        </authorList>
    </citation>
    <scope>NUCLEOTIDE SEQUENCE [GENOMIC DNA]</scope>
</reference>
<reference key="6">
    <citation type="journal article" date="2003" name="Nat. Med.">
        <title>Alternatively spliced human tissue factor: a circulating, soluble, thrombogenic protein.</title>
        <authorList>
            <person name="Bogdanov V.Y."/>
            <person name="Balasubramanian V."/>
            <person name="Hathcock J."/>
            <person name="Vele O."/>
            <person name="Lieb M."/>
            <person name="Nemerson Y."/>
        </authorList>
    </citation>
    <scope>NUCLEOTIDE SEQUENCE [MRNA] (ISOFORM 2)</scope>
    <scope>FUNCTION</scope>
    <scope>SUBCELLULAR LOCATION</scope>
    <scope>TISSUE SPECIFICITY</scope>
</reference>
<reference key="7">
    <citation type="submission" date="2003-05" db="EMBL/GenBank/DDBJ databases">
        <title>Cloning of human full-length CDSs in BD Creator(TM) system donor vector.</title>
        <authorList>
            <person name="Kalnine N."/>
            <person name="Chen X."/>
            <person name="Rolfs A."/>
            <person name="Halleck A."/>
            <person name="Hines L."/>
            <person name="Eisenstein S."/>
            <person name="Koundinya M."/>
            <person name="Raphael J."/>
            <person name="Moreira D."/>
            <person name="Kelley T."/>
            <person name="LaBaer J."/>
            <person name="Lin Y."/>
            <person name="Phelan M."/>
            <person name="Farmer A."/>
        </authorList>
    </citation>
    <scope>NUCLEOTIDE SEQUENCE [LARGE SCALE MRNA] (ISOFORM 1)</scope>
</reference>
<reference key="8">
    <citation type="submission" date="2004-06" db="EMBL/GenBank/DDBJ databases">
        <title>Cloning of human full open reading frames in Gateway(TM) system entry vector (pDONR201).</title>
        <authorList>
            <person name="Ebert L."/>
            <person name="Schick M."/>
            <person name="Neubert P."/>
            <person name="Schatten R."/>
            <person name="Henze S."/>
            <person name="Korn B."/>
        </authorList>
    </citation>
    <scope>NUCLEOTIDE SEQUENCE [LARGE SCALE MRNA]</scope>
</reference>
<reference key="9">
    <citation type="submission" date="2002-08" db="EMBL/GenBank/DDBJ databases">
        <authorList>
            <consortium name="SeattleSNPs variation discovery resource"/>
        </authorList>
    </citation>
    <scope>NUCLEOTIDE SEQUENCE [GENOMIC DNA]</scope>
    <scope>VARIANTS ALA-36 AND VAL-145</scope>
</reference>
<reference key="10">
    <citation type="journal article" date="2006" name="Nature">
        <title>The DNA sequence and biological annotation of human chromosome 1.</title>
        <authorList>
            <person name="Gregory S.G."/>
            <person name="Barlow K.F."/>
            <person name="McLay K.E."/>
            <person name="Kaul R."/>
            <person name="Swarbreck D."/>
            <person name="Dunham A."/>
            <person name="Scott C.E."/>
            <person name="Howe K.L."/>
            <person name="Woodfine K."/>
            <person name="Spencer C.C.A."/>
            <person name="Jones M.C."/>
            <person name="Gillson C."/>
            <person name="Searle S."/>
            <person name="Zhou Y."/>
            <person name="Kokocinski F."/>
            <person name="McDonald L."/>
            <person name="Evans R."/>
            <person name="Phillips K."/>
            <person name="Atkinson A."/>
            <person name="Cooper R."/>
            <person name="Jones C."/>
            <person name="Hall R.E."/>
            <person name="Andrews T.D."/>
            <person name="Lloyd C."/>
            <person name="Ainscough R."/>
            <person name="Almeida J.P."/>
            <person name="Ambrose K.D."/>
            <person name="Anderson F."/>
            <person name="Andrew R.W."/>
            <person name="Ashwell R.I.S."/>
            <person name="Aubin K."/>
            <person name="Babbage A.K."/>
            <person name="Bagguley C.L."/>
            <person name="Bailey J."/>
            <person name="Beasley H."/>
            <person name="Bethel G."/>
            <person name="Bird C.P."/>
            <person name="Bray-Allen S."/>
            <person name="Brown J.Y."/>
            <person name="Brown A.J."/>
            <person name="Buckley D."/>
            <person name="Burton J."/>
            <person name="Bye J."/>
            <person name="Carder C."/>
            <person name="Chapman J.C."/>
            <person name="Clark S.Y."/>
            <person name="Clarke G."/>
            <person name="Clee C."/>
            <person name="Cobley V."/>
            <person name="Collier R.E."/>
            <person name="Corby N."/>
            <person name="Coville G.J."/>
            <person name="Davies J."/>
            <person name="Deadman R."/>
            <person name="Dunn M."/>
            <person name="Earthrowl M."/>
            <person name="Ellington A.G."/>
            <person name="Errington H."/>
            <person name="Frankish A."/>
            <person name="Frankland J."/>
            <person name="French L."/>
            <person name="Garner P."/>
            <person name="Garnett J."/>
            <person name="Gay L."/>
            <person name="Ghori M.R.J."/>
            <person name="Gibson R."/>
            <person name="Gilby L.M."/>
            <person name="Gillett W."/>
            <person name="Glithero R.J."/>
            <person name="Grafham D.V."/>
            <person name="Griffiths C."/>
            <person name="Griffiths-Jones S."/>
            <person name="Grocock R."/>
            <person name="Hammond S."/>
            <person name="Harrison E.S.I."/>
            <person name="Hart E."/>
            <person name="Haugen E."/>
            <person name="Heath P.D."/>
            <person name="Holmes S."/>
            <person name="Holt K."/>
            <person name="Howden P.J."/>
            <person name="Hunt A.R."/>
            <person name="Hunt S.E."/>
            <person name="Hunter G."/>
            <person name="Isherwood J."/>
            <person name="James R."/>
            <person name="Johnson C."/>
            <person name="Johnson D."/>
            <person name="Joy A."/>
            <person name="Kay M."/>
            <person name="Kershaw J.K."/>
            <person name="Kibukawa M."/>
            <person name="Kimberley A.M."/>
            <person name="King A."/>
            <person name="Knights A.J."/>
            <person name="Lad H."/>
            <person name="Laird G."/>
            <person name="Lawlor S."/>
            <person name="Leongamornlert D.A."/>
            <person name="Lloyd D.M."/>
            <person name="Loveland J."/>
            <person name="Lovell J."/>
            <person name="Lush M.J."/>
            <person name="Lyne R."/>
            <person name="Martin S."/>
            <person name="Mashreghi-Mohammadi M."/>
            <person name="Matthews L."/>
            <person name="Matthews N.S.W."/>
            <person name="McLaren S."/>
            <person name="Milne S."/>
            <person name="Mistry S."/>
            <person name="Moore M.J.F."/>
            <person name="Nickerson T."/>
            <person name="O'Dell C.N."/>
            <person name="Oliver K."/>
            <person name="Palmeiri A."/>
            <person name="Palmer S.A."/>
            <person name="Parker A."/>
            <person name="Patel D."/>
            <person name="Pearce A.V."/>
            <person name="Peck A.I."/>
            <person name="Pelan S."/>
            <person name="Phelps K."/>
            <person name="Phillimore B.J."/>
            <person name="Plumb R."/>
            <person name="Rajan J."/>
            <person name="Raymond C."/>
            <person name="Rouse G."/>
            <person name="Saenphimmachak C."/>
            <person name="Sehra H.K."/>
            <person name="Sheridan E."/>
            <person name="Shownkeen R."/>
            <person name="Sims S."/>
            <person name="Skuce C.D."/>
            <person name="Smith M."/>
            <person name="Steward C."/>
            <person name="Subramanian S."/>
            <person name="Sycamore N."/>
            <person name="Tracey A."/>
            <person name="Tromans A."/>
            <person name="Van Helmond Z."/>
            <person name="Wall M."/>
            <person name="Wallis J.M."/>
            <person name="White S."/>
            <person name="Whitehead S.L."/>
            <person name="Wilkinson J.E."/>
            <person name="Willey D.L."/>
            <person name="Williams H."/>
            <person name="Wilming L."/>
            <person name="Wray P.W."/>
            <person name="Wu Z."/>
            <person name="Coulson A."/>
            <person name="Vaudin M."/>
            <person name="Sulston J.E."/>
            <person name="Durbin R.M."/>
            <person name="Hubbard T."/>
            <person name="Wooster R."/>
            <person name="Dunham I."/>
            <person name="Carter N.P."/>
            <person name="McVean G."/>
            <person name="Ross M.T."/>
            <person name="Harrow J."/>
            <person name="Olson M.V."/>
            <person name="Beck S."/>
            <person name="Rogers J."/>
            <person name="Bentley D.R."/>
        </authorList>
    </citation>
    <scope>NUCLEOTIDE SEQUENCE [LARGE SCALE GENOMIC DNA]</scope>
</reference>
<reference key="11">
    <citation type="submission" date="2005-09" db="EMBL/GenBank/DDBJ databases">
        <authorList>
            <person name="Mural R.J."/>
            <person name="Istrail S."/>
            <person name="Sutton G.G."/>
            <person name="Florea L."/>
            <person name="Halpern A.L."/>
            <person name="Mobarry C.M."/>
            <person name="Lippert R."/>
            <person name="Walenz B."/>
            <person name="Shatkay H."/>
            <person name="Dew I."/>
            <person name="Miller J.R."/>
            <person name="Flanigan M.J."/>
            <person name="Edwards N.J."/>
            <person name="Bolanos R."/>
            <person name="Fasulo D."/>
            <person name="Halldorsson B.V."/>
            <person name="Hannenhalli S."/>
            <person name="Turner R."/>
            <person name="Yooseph S."/>
            <person name="Lu F."/>
            <person name="Nusskern D.R."/>
            <person name="Shue B.C."/>
            <person name="Zheng X.H."/>
            <person name="Zhong F."/>
            <person name="Delcher A.L."/>
            <person name="Huson D.H."/>
            <person name="Kravitz S.A."/>
            <person name="Mouchard L."/>
            <person name="Reinert K."/>
            <person name="Remington K.A."/>
            <person name="Clark A.G."/>
            <person name="Waterman M.S."/>
            <person name="Eichler E.E."/>
            <person name="Adams M.D."/>
            <person name="Hunkapiller M.W."/>
            <person name="Myers E.W."/>
            <person name="Venter J.C."/>
        </authorList>
    </citation>
    <scope>NUCLEOTIDE SEQUENCE [LARGE SCALE GENOMIC DNA]</scope>
</reference>
<reference key="12">
    <citation type="journal article" date="2004" name="Genome Res.">
        <title>The status, quality, and expansion of the NIH full-length cDNA project: the Mammalian Gene Collection (MGC).</title>
        <authorList>
            <consortium name="The MGC Project Team"/>
        </authorList>
    </citation>
    <scope>NUCLEOTIDE SEQUENCE [LARGE SCALE MRNA] (ISOFORM 1)</scope>
    <source>
        <tissue>Prostate</tissue>
    </source>
</reference>
<reference key="13">
    <citation type="journal article" date="1977" name="Proc. Natl. Acad. Sci. U.S.A.">
        <title>Activation of factor IX by the reaction product of tissue factor and factor VII: additional pathway for initiating blood coagulation.</title>
        <authorList>
            <person name="Osterud B."/>
            <person name="Rapaport S.I."/>
        </authorList>
    </citation>
    <scope>FUNCTION</scope>
</reference>
<reference key="14">
    <citation type="journal article" date="1988" name="Biochemistry">
        <title>Human tissue factor contains thioester-linked palmitate and stearate on the cytoplasmic half-cystine.</title>
        <authorList>
            <person name="Bach R."/>
            <person name="Konigsberg W.H."/>
            <person name="Nemerson Y."/>
        </authorList>
    </citation>
    <scope>DISULFIDE BONDS</scope>
    <scope>PALMITOYLATION AT CYS-277</scope>
</reference>
<reference key="15">
    <citation type="journal article" date="2009" name="Circ. Res.">
        <title>Cdc2-like kinases and DNA topoisomerase I regulate alternative splicing of tissue factor in human endothelial cells.</title>
        <authorList>
            <person name="Eisenreich A."/>
            <person name="Bogdanov V.Y."/>
            <person name="Zakrzewicz A."/>
            <person name="Pries A."/>
            <person name="Antoniak S."/>
            <person name="Poller W."/>
            <person name="Schultheiss H.P."/>
            <person name="Rauch U."/>
        </authorList>
    </citation>
    <scope>ALTERNATIVE SPLICING</scope>
    <scope>INDUCTION</scope>
</reference>
<reference key="16">
    <citation type="journal article" date="2010" name="Haematologica">
        <title>Heparanase enhances the generation of activated factor X in the presence of tissue factor and activated factor VII.</title>
        <authorList>
            <person name="Nadir Y."/>
            <person name="Brenner B."/>
            <person name="Fux L."/>
            <person name="Shafat I."/>
            <person name="Attias J."/>
            <person name="Vlodavsky I."/>
        </authorList>
    </citation>
    <scope>INTERACTION WITH HPSE</scope>
</reference>
<reference key="17">
    <citation type="journal article" date="2011" name="BMC Syst. Biol.">
        <title>Initial characterization of the human central proteome.</title>
        <authorList>
            <person name="Burkard T.R."/>
            <person name="Planyavsky M."/>
            <person name="Kaupe I."/>
            <person name="Breitwieser F.P."/>
            <person name="Buerckstuemmer T."/>
            <person name="Bennett K.L."/>
            <person name="Superti-Furga G."/>
            <person name="Colinge J."/>
        </authorList>
    </citation>
    <scope>IDENTIFICATION BY MASS SPECTROMETRY [LARGE SCALE ANALYSIS]</scope>
</reference>
<reference key="18">
    <citation type="journal article" date="1994" name="Biochemistry">
        <title>Structure of the extracellular domain of human tissue factor: location of the factor VIIa binding site.</title>
        <authorList>
            <person name="Muller Y.A."/>
            <person name="Ultsch M.H."/>
            <person name="Kelley R.F."/>
            <person name="de Vos A.M."/>
        </authorList>
    </citation>
    <scope>X-RAY CRYSTALLOGRAPHY (3.0 ANGSTROMS) OF 33-243</scope>
</reference>
<reference key="19">
    <citation type="journal article" date="1996" name="J. Mol. Biol.">
        <title>The crystal structure of the extracellular domain of human tissue factor refined to 1.7-A resolution.</title>
        <authorList>
            <person name="Muller Y.A."/>
            <person name="Ultsch M.H."/>
            <person name="de Vos A.M."/>
        </authorList>
    </citation>
    <scope>X-RAY CRYSTALLOGRAPHY (1.7 ANGSTROMS) OF 33-243</scope>
</reference>
<reference key="20">
    <citation type="journal article" date="1996" name="Nature">
        <title>The crystal structure of the complex of blood coagulation factor VIIa with soluble tissue factor.</title>
        <authorList>
            <person name="Banner D.W."/>
            <person name="D'Arcy A."/>
            <person name="Chene C."/>
            <person name="Winkler F.K."/>
            <person name="Guha A."/>
            <person name="Konigsberg W.H."/>
            <person name="Nemreson Y."/>
            <person name="Kirchhofer D."/>
        </authorList>
    </citation>
    <scope>X-RAY CRYSTALLOGRAPHY (2.0 ANGSTROMS) OF 33-251 IN COMPLEX WITH FVIIA</scope>
</reference>
<reference key="21">
    <citation type="journal article" date="1999" name="J. Mol. Biol.">
        <title>Structure of extracellular tissue factor complexed with factor VIIa inhibited with a BPTI mutant.</title>
        <authorList>
            <person name="Zhang E."/>
            <person name="St Charles R."/>
            <person name="Tulinsky A."/>
        </authorList>
    </citation>
    <scope>X-RAY CRYSTALLOGRAPHY (2.1 ANGSTROMS) OF 37-242 IN COMPLEX WITH FVIIA</scope>
</reference>
<sequence length="295" mass="33068">METPAWPRVPRPETAVARTLLLGWVFAQVAGASGTTNTVAAYNLTWKSTNFKTILEWEPKPVNQVYTVQISTKSGDWKSKCFYTTDTECDLTDEIVKDVKQTYLARVFSYPAGNVESTGSAGEPLYENSPEFTPYLETNLGQPTIQSFEQVGTKVNVTVEDERTLVRRNNTFLSLRDVFGKDLIYTLYYWKSSSSGKKTAKTNTNEFLIDVDKGENYCFSVQAVIPSRTVNRKSTDSPVECMGQEKGEFREIFYIIGAVVFVVIILVIILAISLHKCRKAGVGQSWKENSPLNVS</sequence>
<accession>P13726</accession>
<accession>D3DT47</accession>
<accession>Q6FHG2</accession>
<accession>Q86WH4</accession>
<organism>
    <name type="scientific">Homo sapiens</name>
    <name type="common">Human</name>
    <dbReference type="NCBI Taxonomy" id="9606"/>
    <lineage>
        <taxon>Eukaryota</taxon>
        <taxon>Metazoa</taxon>
        <taxon>Chordata</taxon>
        <taxon>Craniata</taxon>
        <taxon>Vertebrata</taxon>
        <taxon>Euteleostomi</taxon>
        <taxon>Mammalia</taxon>
        <taxon>Eutheria</taxon>
        <taxon>Euarchontoglires</taxon>
        <taxon>Primates</taxon>
        <taxon>Haplorrhini</taxon>
        <taxon>Catarrhini</taxon>
        <taxon>Hominidae</taxon>
        <taxon>Homo</taxon>
    </lineage>
</organism>
<evidence type="ECO:0000255" key="1"/>
<evidence type="ECO:0000269" key="2">
    <source>
    </source>
</evidence>
<evidence type="ECO:0000269" key="3">
    <source>
    </source>
</evidence>
<evidence type="ECO:0000269" key="4">
    <source>
    </source>
</evidence>
<evidence type="ECO:0000269" key="5">
    <source>
    </source>
</evidence>
<evidence type="ECO:0000269" key="6">
    <source>
    </source>
</evidence>
<evidence type="ECO:0000269" key="7">
    <source>
    </source>
</evidence>
<evidence type="ECO:0000269" key="8">
    <source>
    </source>
</evidence>
<evidence type="ECO:0000269" key="9">
    <source ref="9"/>
</evidence>
<evidence type="ECO:0000303" key="10">
    <source>
    </source>
</evidence>
<evidence type="ECO:0000305" key="11"/>
<evidence type="ECO:0007829" key="12">
    <source>
        <dbReference type="PDB" id="1BOY"/>
    </source>
</evidence>
<evidence type="ECO:0007829" key="13">
    <source>
        <dbReference type="PDB" id="1UJ3"/>
    </source>
</evidence>
<evidence type="ECO:0007829" key="14">
    <source>
        <dbReference type="PDB" id="1WV7"/>
    </source>
</evidence>
<evidence type="ECO:0007829" key="15">
    <source>
        <dbReference type="PDB" id="1Z6J"/>
    </source>
</evidence>
<evidence type="ECO:0007829" key="16">
    <source>
        <dbReference type="PDB" id="2CEF"/>
    </source>
</evidence>
<evidence type="ECO:0007829" key="17">
    <source>
        <dbReference type="PDB" id="2HFT"/>
    </source>
</evidence>
<evidence type="ECO:0007829" key="18">
    <source>
        <dbReference type="PDB" id="3TH2"/>
    </source>
</evidence>
<evidence type="ECO:0007829" key="19">
    <source>
        <dbReference type="PDB" id="4YLQ"/>
    </source>
</evidence>
<evidence type="ECO:0007829" key="20">
    <source>
        <dbReference type="PDB" id="6R2W"/>
    </source>
</evidence>
<evidence type="ECO:0007829" key="21">
    <source>
        <dbReference type="PDB" id="8CN9"/>
    </source>
</evidence>
<feature type="signal peptide">
    <location>
        <begin position="1"/>
        <end position="32"/>
    </location>
</feature>
<feature type="chain" id="PRO_0000033638" description="Tissue factor">
    <location>
        <begin position="33"/>
        <end position="295"/>
    </location>
</feature>
<feature type="topological domain" description="Extracellular" evidence="1">
    <location>
        <begin position="33"/>
        <end position="251"/>
    </location>
</feature>
<feature type="transmembrane region" description="Helical" evidence="1">
    <location>
        <begin position="252"/>
        <end position="274"/>
    </location>
</feature>
<feature type="topological domain" description="Cytoplasmic" evidence="1">
    <location>
        <begin position="275"/>
        <end position="295"/>
    </location>
</feature>
<feature type="short sequence motif" description="WKS motif">
    <location>
        <begin position="46"/>
        <end position="48"/>
    </location>
</feature>
<feature type="short sequence motif" description="WKS motif">
    <location>
        <begin position="77"/>
        <end position="79"/>
    </location>
</feature>
<feature type="short sequence motif" description="WKS motif">
    <location>
        <begin position="190"/>
        <end position="192"/>
    </location>
</feature>
<feature type="lipid moiety-binding region" description="S-palmitoyl cysteine" evidence="6">
    <location>
        <position position="277"/>
    </location>
</feature>
<feature type="glycosylation site" description="N-linked (GlcNAc...) asparagine" evidence="1">
    <location>
        <position position="156"/>
    </location>
</feature>
<feature type="glycosylation site" description="N-linked (GlcNAc...) asparagine" evidence="1">
    <location>
        <position position="169"/>
    </location>
</feature>
<feature type="disulfide bond" evidence="6">
    <location>
        <begin position="81"/>
        <end position="89"/>
    </location>
</feature>
<feature type="disulfide bond" evidence="6">
    <location>
        <begin position="218"/>
        <end position="241"/>
    </location>
</feature>
<feature type="splice variant" id="VSP_041896" description="In isoform 2." evidence="10">
    <original>TAKTNTNEFLIDVDKGENYCFSVQAVIPSRTVNRKSTDSP</original>
    <variation>YSTSLELWYLWSSSLSSSWLYLYTSVERQEWGRAGRRTPH</variation>
    <location>
        <begin position="199"/>
        <end position="238"/>
    </location>
</feature>
<feature type="splice variant" id="VSP_041897" description="In isoform 2." evidence="10">
    <location>
        <begin position="239"/>
        <end position="295"/>
    </location>
</feature>
<feature type="sequence variant" id="VAR_014298" description="In dbSNP:rs3917604." evidence="9">
    <original>T</original>
    <variation>A</variation>
    <location>
        <position position="36"/>
    </location>
</feature>
<feature type="sequence variant" id="VAR_014299" description="In dbSNP:rs3917627." evidence="9">
    <original>I</original>
    <variation>V</variation>
    <location>
        <position position="145"/>
    </location>
</feature>
<feature type="sequence variant" id="VAR_012008" description="In dbSNP:rs5901.">
    <original>R</original>
    <variation>W</variation>
    <location>
        <position position="163"/>
    </location>
</feature>
<feature type="sequence variant" id="VAR_052280" description="In dbSNP:rs3789683.">
    <original>G</original>
    <variation>E</variation>
    <location>
        <position position="281"/>
    </location>
</feature>
<feature type="sequence conflict" description="In Ref. 1; AAA61151." evidence="11" ref="1">
    <original>V</original>
    <variation>A</variation>
    <location>
        <position position="260"/>
    </location>
</feature>
<feature type="strand" evidence="20">
    <location>
        <begin position="42"/>
        <end position="49"/>
    </location>
</feature>
<feature type="strand" evidence="20">
    <location>
        <begin position="52"/>
        <end position="58"/>
    </location>
</feature>
<feature type="strand" evidence="20">
    <location>
        <begin position="62"/>
        <end position="72"/>
    </location>
</feature>
<feature type="strand" evidence="13">
    <location>
        <begin position="73"/>
        <end position="75"/>
    </location>
</feature>
<feature type="strand" evidence="20">
    <location>
        <begin position="78"/>
        <end position="85"/>
    </location>
</feature>
<feature type="strand" evidence="20">
    <location>
        <begin position="87"/>
        <end position="90"/>
    </location>
</feature>
<feature type="helix" evidence="20">
    <location>
        <begin position="92"/>
        <end position="95"/>
    </location>
</feature>
<feature type="helix" evidence="17">
    <location>
        <begin position="96"/>
        <end position="98"/>
    </location>
</feature>
<feature type="strand" evidence="21">
    <location>
        <begin position="99"/>
        <end position="101"/>
    </location>
</feature>
<feature type="strand" evidence="20">
    <location>
        <begin position="103"/>
        <end position="111"/>
    </location>
</feature>
<feature type="helix" evidence="15">
    <location>
        <begin position="113"/>
        <end position="115"/>
    </location>
</feature>
<feature type="turn" evidence="19">
    <location>
        <begin position="119"/>
        <end position="122"/>
    </location>
</feature>
<feature type="strand" evidence="20">
    <location>
        <begin position="126"/>
        <end position="128"/>
    </location>
</feature>
<feature type="helix" evidence="20">
    <location>
        <begin position="134"/>
        <end position="137"/>
    </location>
</feature>
<feature type="strand" evidence="20">
    <location>
        <begin position="145"/>
        <end position="151"/>
    </location>
</feature>
<feature type="strand" evidence="20">
    <location>
        <begin position="154"/>
        <end position="159"/>
    </location>
</feature>
<feature type="strand" evidence="20">
    <location>
        <begin position="163"/>
        <end position="168"/>
    </location>
</feature>
<feature type="strand" evidence="20">
    <location>
        <begin position="171"/>
        <end position="174"/>
    </location>
</feature>
<feature type="helix" evidence="20">
    <location>
        <begin position="175"/>
        <end position="179"/>
    </location>
</feature>
<feature type="helix" evidence="20">
    <location>
        <begin position="180"/>
        <end position="182"/>
    </location>
</feature>
<feature type="strand" evidence="20">
    <location>
        <begin position="184"/>
        <end position="191"/>
    </location>
</feature>
<feature type="strand" evidence="18">
    <location>
        <begin position="194"/>
        <end position="196"/>
    </location>
</feature>
<feature type="strand" evidence="20">
    <location>
        <begin position="198"/>
        <end position="210"/>
    </location>
</feature>
<feature type="strand" evidence="14">
    <location>
        <begin position="213"/>
        <end position="215"/>
    </location>
</feature>
<feature type="strand" evidence="20">
    <location>
        <begin position="217"/>
        <end position="224"/>
    </location>
</feature>
<feature type="strand" evidence="20">
    <location>
        <begin position="229"/>
        <end position="231"/>
    </location>
</feature>
<feature type="strand" evidence="12">
    <location>
        <begin position="240"/>
        <end position="243"/>
    </location>
</feature>
<feature type="strand" evidence="16">
    <location>
        <begin position="279"/>
        <end position="284"/>
    </location>
</feature>
<feature type="strand" evidence="16">
    <location>
        <begin position="289"/>
        <end position="293"/>
    </location>
</feature>
<keyword id="KW-0002">3D-structure</keyword>
<keyword id="KW-0025">Alternative splicing</keyword>
<keyword id="KW-0094">Blood coagulation</keyword>
<keyword id="KW-1015">Disulfide bond</keyword>
<keyword id="KW-0325">Glycoprotein</keyword>
<keyword id="KW-0356">Hemostasis</keyword>
<keyword id="KW-0449">Lipoprotein</keyword>
<keyword id="KW-0472">Membrane</keyword>
<keyword id="KW-0564">Palmitate</keyword>
<keyword id="KW-1267">Proteomics identification</keyword>
<keyword id="KW-1185">Reference proteome</keyword>
<keyword id="KW-0964">Secreted</keyword>
<keyword id="KW-0732">Signal</keyword>
<keyword id="KW-0812">Transmembrane</keyword>
<keyword id="KW-1133">Transmembrane helix</keyword>
<dbReference type="EMBL" id="M16553">
    <property type="protein sequence ID" value="AAA61151.1"/>
    <property type="molecule type" value="mRNA"/>
</dbReference>
<dbReference type="EMBL" id="J02931">
    <property type="protein sequence ID" value="AAA61150.1"/>
    <property type="molecule type" value="mRNA"/>
</dbReference>
<dbReference type="EMBL" id="M27436">
    <property type="protein sequence ID" value="AAA36734.1"/>
    <property type="molecule type" value="mRNA"/>
</dbReference>
<dbReference type="EMBL" id="J02846">
    <property type="protein sequence ID" value="AAA61152.1"/>
    <property type="molecule type" value="Genomic_DNA"/>
</dbReference>
<dbReference type="EMBL" id="BT019808">
    <property type="protein sequence ID" value="AAV38611.1"/>
    <property type="molecule type" value="mRNA"/>
</dbReference>
<dbReference type="EMBL" id="CR541792">
    <property type="protein sequence ID" value="CAG46591.1"/>
    <property type="molecule type" value="mRNA"/>
</dbReference>
<dbReference type="EMBL" id="AF487337">
    <property type="protein sequence ID" value="AAO61150.1"/>
    <property type="molecule type" value="mRNA"/>
</dbReference>
<dbReference type="EMBL" id="AF540377">
    <property type="protein sequence ID" value="AAN01236.1"/>
    <property type="molecule type" value="Genomic_DNA"/>
</dbReference>
<dbReference type="EMBL" id="AC093117">
    <property type="status" value="NOT_ANNOTATED_CDS"/>
    <property type="molecule type" value="Genomic_DNA"/>
</dbReference>
<dbReference type="EMBL" id="CH471097">
    <property type="protein sequence ID" value="EAW73044.1"/>
    <property type="molecule type" value="Genomic_DNA"/>
</dbReference>
<dbReference type="EMBL" id="CH471097">
    <property type="protein sequence ID" value="EAW73045.1"/>
    <property type="molecule type" value="Genomic_DNA"/>
</dbReference>
<dbReference type="EMBL" id="BC011029">
    <property type="protein sequence ID" value="AAH11029.1"/>
    <property type="molecule type" value="mRNA"/>
</dbReference>
<dbReference type="CCDS" id="CCDS53345.1">
    <molecule id="P13726-2"/>
</dbReference>
<dbReference type="CCDS" id="CCDS750.1">
    <molecule id="P13726-1"/>
</dbReference>
<dbReference type="PIR" id="A43645">
    <property type="entry name" value="KFHU3"/>
</dbReference>
<dbReference type="RefSeq" id="NP_001171567.1">
    <molecule id="P13726-2"/>
    <property type="nucleotide sequence ID" value="NM_001178096.2"/>
</dbReference>
<dbReference type="RefSeq" id="NP_001984.1">
    <molecule id="P13726-1"/>
    <property type="nucleotide sequence ID" value="NM_001993.5"/>
</dbReference>
<dbReference type="PDB" id="1AHW">
    <property type="method" value="X-ray"/>
    <property type="resolution" value="3.00 A"/>
    <property type="chains" value="C/F=33-251"/>
</dbReference>
<dbReference type="PDB" id="1BOY">
    <property type="method" value="X-ray"/>
    <property type="resolution" value="2.20 A"/>
    <property type="chains" value="A=33-251"/>
</dbReference>
<dbReference type="PDB" id="1DAN">
    <property type="method" value="X-ray"/>
    <property type="resolution" value="2.00 A"/>
    <property type="chains" value="T=37-116, U=122-242"/>
</dbReference>
<dbReference type="PDB" id="1FAK">
    <property type="method" value="X-ray"/>
    <property type="resolution" value="2.10 A"/>
    <property type="chains" value="T=37-242"/>
</dbReference>
<dbReference type="PDB" id="1J9C">
    <property type="method" value="X-ray"/>
    <property type="resolution" value="2.90 A"/>
    <property type="chains" value="T=33-242"/>
</dbReference>
<dbReference type="PDB" id="1JPS">
    <property type="method" value="X-ray"/>
    <property type="resolution" value="1.85 A"/>
    <property type="chains" value="T=33-251"/>
</dbReference>
<dbReference type="PDB" id="1O5D">
    <property type="method" value="X-ray"/>
    <property type="resolution" value="2.05 A"/>
    <property type="chains" value="T=34-251"/>
</dbReference>
<dbReference type="PDB" id="1TFH">
    <property type="method" value="X-ray"/>
    <property type="resolution" value="2.40 A"/>
    <property type="chains" value="A/B=33-251"/>
</dbReference>
<dbReference type="PDB" id="1UJ3">
    <property type="method" value="X-ray"/>
    <property type="resolution" value="2.10 A"/>
    <property type="chains" value="C=38-242"/>
</dbReference>
<dbReference type="PDB" id="1W0Y">
    <property type="method" value="X-ray"/>
    <property type="resolution" value="2.50 A"/>
    <property type="chains" value="T=33-242"/>
</dbReference>
<dbReference type="PDB" id="1W2K">
    <property type="method" value="X-ray"/>
    <property type="resolution" value="3.00 A"/>
    <property type="chains" value="T=33-242"/>
</dbReference>
<dbReference type="PDB" id="1WQV">
    <property type="method" value="X-ray"/>
    <property type="resolution" value="2.50 A"/>
    <property type="chains" value="T=33-250"/>
</dbReference>
<dbReference type="PDB" id="1WSS">
    <property type="method" value="X-ray"/>
    <property type="resolution" value="2.60 A"/>
    <property type="chains" value="T=33-250"/>
</dbReference>
<dbReference type="PDB" id="1WTG">
    <property type="method" value="X-ray"/>
    <property type="resolution" value="2.20 A"/>
    <property type="chains" value="T=33-250"/>
</dbReference>
<dbReference type="PDB" id="1WUN">
    <property type="method" value="X-ray"/>
    <property type="resolution" value="2.40 A"/>
    <property type="chains" value="T=33-250"/>
</dbReference>
<dbReference type="PDB" id="1WV7">
    <property type="method" value="X-ray"/>
    <property type="resolution" value="2.70 A"/>
    <property type="chains" value="T=33-250"/>
</dbReference>
<dbReference type="PDB" id="1Z6J">
    <property type="method" value="X-ray"/>
    <property type="resolution" value="2.00 A"/>
    <property type="chains" value="T=33-243"/>
</dbReference>
<dbReference type="PDB" id="2A2Q">
    <property type="method" value="X-ray"/>
    <property type="resolution" value="1.80 A"/>
    <property type="chains" value="T=38-242"/>
</dbReference>
<dbReference type="PDB" id="2AEI">
    <property type="method" value="X-ray"/>
    <property type="resolution" value="2.52 A"/>
    <property type="chains" value="T=33-243"/>
</dbReference>
<dbReference type="PDB" id="2AER">
    <property type="method" value="X-ray"/>
    <property type="resolution" value="1.87 A"/>
    <property type="chains" value="T=38-242"/>
</dbReference>
<dbReference type="PDB" id="2B7D">
    <property type="method" value="X-ray"/>
    <property type="resolution" value="2.24 A"/>
    <property type="chains" value="T=34-251"/>
</dbReference>
<dbReference type="PDB" id="2B8O">
    <property type="method" value="X-ray"/>
    <property type="resolution" value="2.80 A"/>
    <property type="chains" value="T=38-242"/>
</dbReference>
<dbReference type="PDB" id="2C4F">
    <property type="method" value="X-ray"/>
    <property type="resolution" value="1.72 A"/>
    <property type="chains" value="T=38-112, U=123-242"/>
</dbReference>
<dbReference type="PDB" id="2CEF">
    <property type="method" value="NMR"/>
    <property type="chains" value="A=277-295"/>
</dbReference>
<dbReference type="PDB" id="2CEH">
    <property type="method" value="NMR"/>
    <property type="chains" value="A=277-295"/>
</dbReference>
<dbReference type="PDB" id="2CEZ">
    <property type="method" value="NMR"/>
    <property type="chains" value="A=277-295"/>
</dbReference>
<dbReference type="PDB" id="2CFJ">
    <property type="method" value="NMR"/>
    <property type="chains" value="A=277-295"/>
</dbReference>
<dbReference type="PDB" id="2EC9">
    <property type="method" value="X-ray"/>
    <property type="resolution" value="2.00 A"/>
    <property type="chains" value="T=38-112, U=123-242"/>
</dbReference>
<dbReference type="PDB" id="2F9B">
    <property type="method" value="X-ray"/>
    <property type="resolution" value="2.54 A"/>
    <property type="chains" value="T=34-251"/>
</dbReference>
<dbReference type="PDB" id="2FIR">
    <property type="method" value="X-ray"/>
    <property type="resolution" value="2.00 A"/>
    <property type="chains" value="T=38-242"/>
</dbReference>
<dbReference type="PDB" id="2FLB">
    <property type="method" value="X-ray"/>
    <property type="resolution" value="1.95 A"/>
    <property type="chains" value="T=34-251"/>
</dbReference>
<dbReference type="PDB" id="2FLR">
    <property type="method" value="X-ray"/>
    <property type="resolution" value="2.35 A"/>
    <property type="chains" value="T=34-251"/>
</dbReference>
<dbReference type="PDB" id="2HFT">
    <property type="method" value="X-ray"/>
    <property type="resolution" value="1.69 A"/>
    <property type="chains" value="A=33-243"/>
</dbReference>
<dbReference type="PDB" id="2PUQ">
    <property type="method" value="X-ray"/>
    <property type="resolution" value="2.05 A"/>
    <property type="chains" value="T=38-241"/>
</dbReference>
<dbReference type="PDB" id="2ZP0">
    <property type="method" value="X-ray"/>
    <property type="resolution" value="2.70 A"/>
    <property type="chains" value="T=33-250"/>
</dbReference>
<dbReference type="PDB" id="2ZWL">
    <property type="method" value="X-ray"/>
    <property type="resolution" value="2.20 A"/>
    <property type="chains" value="T=33-250"/>
</dbReference>
<dbReference type="PDB" id="2ZZU">
    <property type="method" value="X-ray"/>
    <property type="resolution" value="2.50 A"/>
    <property type="chains" value="T=33-250"/>
</dbReference>
<dbReference type="PDB" id="3ELA">
    <property type="method" value="X-ray"/>
    <property type="resolution" value="2.20 A"/>
    <property type="chains" value="T=33-241"/>
</dbReference>
<dbReference type="PDB" id="3TH2">
    <property type="method" value="X-ray"/>
    <property type="resolution" value="1.72 A"/>
    <property type="chains" value="T=38-242"/>
</dbReference>
<dbReference type="PDB" id="3TH3">
    <property type="method" value="X-ray"/>
    <property type="resolution" value="2.70 A"/>
    <property type="chains" value="T=38-242"/>
</dbReference>
<dbReference type="PDB" id="3TH4">
    <property type="method" value="X-ray"/>
    <property type="resolution" value="1.80 A"/>
    <property type="chains" value="T=38-242"/>
</dbReference>
<dbReference type="PDB" id="4IBL">
    <property type="method" value="X-ray"/>
    <property type="resolution" value="1.80 A"/>
    <property type="chains" value="T=33-251"/>
</dbReference>
<dbReference type="PDB" id="4M7L">
    <property type="method" value="X-ray"/>
    <property type="resolution" value="3.40 A"/>
    <property type="chains" value="T=37-245"/>
</dbReference>
<dbReference type="PDB" id="4YLQ">
    <property type="method" value="X-ray"/>
    <property type="resolution" value="1.40 A"/>
    <property type="chains" value="T=33-251"/>
</dbReference>
<dbReference type="PDB" id="4Z6A">
    <property type="method" value="X-ray"/>
    <property type="resolution" value="2.25 A"/>
    <property type="chains" value="T=36-242"/>
</dbReference>
<dbReference type="PDB" id="4ZMA">
    <property type="method" value="X-ray"/>
    <property type="resolution" value="2.30 A"/>
    <property type="chains" value="T=33-251"/>
</dbReference>
<dbReference type="PDB" id="5W06">
    <property type="method" value="X-ray"/>
    <property type="resolution" value="2.60 A"/>
    <property type="chains" value="T=37-245"/>
</dbReference>
<dbReference type="PDB" id="6R2W">
    <property type="method" value="X-ray"/>
    <property type="resolution" value="1.25 A"/>
    <property type="chains" value="T=33-242"/>
</dbReference>
<dbReference type="PDB" id="6Z9W">
    <property type="method" value="X-ray"/>
    <property type="resolution" value="2.70 A"/>
    <property type="chains" value="C/F=21-29"/>
</dbReference>
<dbReference type="PDB" id="8CN9">
    <property type="method" value="X-ray"/>
    <property type="resolution" value="3.40 A"/>
    <property type="chains" value="E/J/O/T=33-251"/>
</dbReference>
<dbReference type="PDB" id="8QOD">
    <property type="method" value="X-ray"/>
    <property type="resolution" value="1.57 A"/>
    <property type="chains" value="C=1-243"/>
</dbReference>
<dbReference type="PDB" id="8QQ6">
    <property type="method" value="X-ray"/>
    <property type="resolution" value="1.87 A"/>
    <property type="chains" value="C=1-243"/>
</dbReference>
<dbReference type="PDB" id="8UUD">
    <property type="method" value="X-ray"/>
    <property type="resolution" value="2.40 A"/>
    <property type="chains" value="T=38-112, U=123-242"/>
</dbReference>
<dbReference type="PDBsum" id="1AHW"/>
<dbReference type="PDBsum" id="1BOY"/>
<dbReference type="PDBsum" id="1DAN"/>
<dbReference type="PDBsum" id="1FAK"/>
<dbReference type="PDBsum" id="1J9C"/>
<dbReference type="PDBsum" id="1JPS"/>
<dbReference type="PDBsum" id="1O5D"/>
<dbReference type="PDBsum" id="1TFH"/>
<dbReference type="PDBsum" id="1UJ3"/>
<dbReference type="PDBsum" id="1W0Y"/>
<dbReference type="PDBsum" id="1W2K"/>
<dbReference type="PDBsum" id="1WQV"/>
<dbReference type="PDBsum" id="1WSS"/>
<dbReference type="PDBsum" id="1WTG"/>
<dbReference type="PDBsum" id="1WUN"/>
<dbReference type="PDBsum" id="1WV7"/>
<dbReference type="PDBsum" id="1Z6J"/>
<dbReference type="PDBsum" id="2A2Q"/>
<dbReference type="PDBsum" id="2AEI"/>
<dbReference type="PDBsum" id="2AER"/>
<dbReference type="PDBsum" id="2B7D"/>
<dbReference type="PDBsum" id="2B8O"/>
<dbReference type="PDBsum" id="2C4F"/>
<dbReference type="PDBsum" id="2CEF"/>
<dbReference type="PDBsum" id="2CEH"/>
<dbReference type="PDBsum" id="2CEZ"/>
<dbReference type="PDBsum" id="2CFJ"/>
<dbReference type="PDBsum" id="2EC9"/>
<dbReference type="PDBsum" id="2F9B"/>
<dbReference type="PDBsum" id="2FIR"/>
<dbReference type="PDBsum" id="2FLB"/>
<dbReference type="PDBsum" id="2FLR"/>
<dbReference type="PDBsum" id="2HFT"/>
<dbReference type="PDBsum" id="2PUQ"/>
<dbReference type="PDBsum" id="2ZP0"/>
<dbReference type="PDBsum" id="2ZWL"/>
<dbReference type="PDBsum" id="2ZZU"/>
<dbReference type="PDBsum" id="3ELA"/>
<dbReference type="PDBsum" id="3TH2"/>
<dbReference type="PDBsum" id="3TH3"/>
<dbReference type="PDBsum" id="3TH4"/>
<dbReference type="PDBsum" id="4IBL"/>
<dbReference type="PDBsum" id="4M7L"/>
<dbReference type="PDBsum" id="4YLQ"/>
<dbReference type="PDBsum" id="4Z6A"/>
<dbReference type="PDBsum" id="4ZMA"/>
<dbReference type="PDBsum" id="5W06"/>
<dbReference type="PDBsum" id="6R2W"/>
<dbReference type="PDBsum" id="6Z9W"/>
<dbReference type="PDBsum" id="8CN9"/>
<dbReference type="PDBsum" id="8QOD"/>
<dbReference type="PDBsum" id="8QQ6"/>
<dbReference type="PDBsum" id="8UUD"/>
<dbReference type="BMRB" id="P13726"/>
<dbReference type="SMR" id="P13726"/>
<dbReference type="BioGRID" id="108451">
    <property type="interactions" value="34"/>
</dbReference>
<dbReference type="ComplexPortal" id="CPX-2808">
    <property type="entry name" value="Coagulation factor VIIa - tissue factor complex"/>
</dbReference>
<dbReference type="CORUM" id="P13726"/>
<dbReference type="DIP" id="DIP-6136N"/>
<dbReference type="FunCoup" id="P13726">
    <property type="interactions" value="190"/>
</dbReference>
<dbReference type="IntAct" id="P13726">
    <property type="interactions" value="17"/>
</dbReference>
<dbReference type="STRING" id="9606.ENSP00000334145"/>
<dbReference type="BindingDB" id="P13726"/>
<dbReference type="ChEMBL" id="CHEMBL4081"/>
<dbReference type="DrugBank" id="DB07207">
    <property type="generic name" value="2-(4-HYDROXY-5-PHENYL-1H-PYRAZOL-3-YL)-1H-BENZOIMIDAZOLE-5-CARBOXAMIDINE"/>
</dbReference>
<dbReference type="DrugBank" id="DB07247">
    <property type="generic name" value="[2'-HYDROXY-3'-(1H-PYRROLO[3,2-C]PYRIDIN-2-YL)-BIPHENYL-3-YLMETHYL]-UREA"/>
</dbReference>
<dbReference type="DrugBank" id="DB08232">
    <property type="generic name" value="[5-(5-Amino-1H-pyrrolo[3,2-b]pyridin-2-yl)-6-hydroxy-3'-nitro-3-biphenylyl]acetic acid"/>
</dbReference>
<dbReference type="DrugBank" id="DB06552">
    <property type="generic name" value="Anpocogin"/>
</dbReference>
<dbReference type="DrugBank" id="DB13150">
    <property type="generic name" value="Coagulation factor VII human"/>
</dbReference>
<dbReference type="DrugBank" id="DB00036">
    <property type="generic name" value="Coagulation factor VIIa Recombinant Human"/>
</dbReference>
<dbReference type="DrugBank" id="DB16732">
    <property type="generic name" value="Tisotumab vedotin"/>
</dbReference>
<dbReference type="DrugCentral" id="P13726"/>
<dbReference type="TCDB" id="8.A.132.2.1">
    <property type="family name" value="the interferon/interleukin receptor (iir) family"/>
</dbReference>
<dbReference type="GlyConnect" id="1811">
    <property type="glycosylation" value="1 N-Linked glycan (1 site)"/>
</dbReference>
<dbReference type="GlyCosmos" id="P13726">
    <property type="glycosylation" value="2 sites, 1 glycan"/>
</dbReference>
<dbReference type="GlyGen" id="P13726">
    <property type="glycosylation" value="3 sites, 9 N-linked glycans (2 sites)"/>
</dbReference>
<dbReference type="iPTMnet" id="P13726"/>
<dbReference type="PhosphoSitePlus" id="P13726"/>
<dbReference type="SwissPalm" id="P13726"/>
<dbReference type="BioMuta" id="F3"/>
<dbReference type="DMDM" id="135666"/>
<dbReference type="CPTAC" id="CPTAC-1479"/>
<dbReference type="jPOST" id="P13726"/>
<dbReference type="MassIVE" id="P13726"/>
<dbReference type="PaxDb" id="9606-ENSP00000334145"/>
<dbReference type="PeptideAtlas" id="P13726"/>
<dbReference type="ProteomicsDB" id="52976">
    <molecule id="P13726-1"/>
</dbReference>
<dbReference type="ProteomicsDB" id="52977">
    <molecule id="P13726-2"/>
</dbReference>
<dbReference type="Pumba" id="P13726"/>
<dbReference type="ABCD" id="P13726">
    <property type="antibodies" value="10 sequenced antibodies"/>
</dbReference>
<dbReference type="Antibodypedia" id="4000">
    <property type="antibodies" value="1025 antibodies from 45 providers"/>
</dbReference>
<dbReference type="DNASU" id="2152"/>
<dbReference type="Ensembl" id="ENST00000334047.12">
    <molecule id="P13726-1"/>
    <property type="protein sequence ID" value="ENSP00000334145.7"/>
    <property type="gene ID" value="ENSG00000117525.14"/>
</dbReference>
<dbReference type="Ensembl" id="ENST00000370207.4">
    <molecule id="P13726-2"/>
    <property type="protein sequence ID" value="ENSP00000359226.4"/>
    <property type="gene ID" value="ENSG00000117525.14"/>
</dbReference>
<dbReference type="GeneID" id="2152"/>
<dbReference type="KEGG" id="hsa:2152"/>
<dbReference type="MANE-Select" id="ENST00000334047.12">
    <property type="protein sequence ID" value="ENSP00000334145.7"/>
    <property type="RefSeq nucleotide sequence ID" value="NM_001993.5"/>
    <property type="RefSeq protein sequence ID" value="NP_001984.1"/>
</dbReference>
<dbReference type="UCSC" id="uc001dqr.4">
    <molecule id="P13726-1"/>
    <property type="organism name" value="human"/>
</dbReference>
<dbReference type="AGR" id="HGNC:3541"/>
<dbReference type="CTD" id="2152"/>
<dbReference type="DisGeNET" id="2152"/>
<dbReference type="GeneCards" id="F3"/>
<dbReference type="HGNC" id="HGNC:3541">
    <property type="gene designation" value="F3"/>
</dbReference>
<dbReference type="HPA" id="ENSG00000117525">
    <property type="expression patterns" value="Low tissue specificity"/>
</dbReference>
<dbReference type="MIM" id="134390">
    <property type="type" value="gene"/>
</dbReference>
<dbReference type="neXtProt" id="NX_P13726"/>
<dbReference type="OpenTargets" id="ENSG00000117525"/>
<dbReference type="PharmGKB" id="PA158"/>
<dbReference type="VEuPathDB" id="HostDB:ENSG00000117525"/>
<dbReference type="eggNOG" id="ENOG502RA1F">
    <property type="taxonomic scope" value="Eukaryota"/>
</dbReference>
<dbReference type="GeneTree" id="ENSGT00390000012668"/>
<dbReference type="HOGENOM" id="CLU_082139_0_0_1"/>
<dbReference type="InParanoid" id="P13726"/>
<dbReference type="OMA" id="PINYVYT"/>
<dbReference type="OrthoDB" id="8942372at2759"/>
<dbReference type="PAN-GO" id="P13726">
    <property type="GO annotations" value="3 GO annotations based on evolutionary models"/>
</dbReference>
<dbReference type="PhylomeDB" id="P13726"/>
<dbReference type="TreeFam" id="TF352627"/>
<dbReference type="BioCyc" id="MetaCyc:ENSG00000117525-MONOMER"/>
<dbReference type="PathwayCommons" id="P13726"/>
<dbReference type="Reactome" id="R-HSA-140834">
    <property type="pathway name" value="Extrinsic Pathway of Fibrin Clot Formation"/>
</dbReference>
<dbReference type="Reactome" id="R-HSA-9031628">
    <property type="pathway name" value="NGF-stimulated transcription"/>
</dbReference>
<dbReference type="SignaLink" id="P13726"/>
<dbReference type="SIGNOR" id="P13726"/>
<dbReference type="BioGRID-ORCS" id="2152">
    <property type="hits" value="9 hits in 1149 CRISPR screens"/>
</dbReference>
<dbReference type="ChiTaRS" id="F3">
    <property type="organism name" value="human"/>
</dbReference>
<dbReference type="EvolutionaryTrace" id="P13726"/>
<dbReference type="GeneWiki" id="Tissue_factor"/>
<dbReference type="GenomeRNAi" id="2152"/>
<dbReference type="Pharos" id="P13726">
    <property type="development level" value="Tclin"/>
</dbReference>
<dbReference type="PRO" id="PR:P13726"/>
<dbReference type="Proteomes" id="UP000005640">
    <property type="component" value="Chromosome 1"/>
</dbReference>
<dbReference type="RNAct" id="P13726">
    <property type="molecule type" value="protein"/>
</dbReference>
<dbReference type="Bgee" id="ENSG00000117525">
    <property type="expression patterns" value="Expressed in mucosa of paranasal sinus and 207 other cell types or tissues"/>
</dbReference>
<dbReference type="GO" id="GO:0009986">
    <property type="term" value="C:cell surface"/>
    <property type="evidence" value="ECO:0000314"/>
    <property type="project" value="BHF-UCL"/>
</dbReference>
<dbReference type="GO" id="GO:0062023">
    <property type="term" value="C:collagen-containing extracellular matrix"/>
    <property type="evidence" value="ECO:0000314"/>
    <property type="project" value="BHF-UCL"/>
</dbReference>
<dbReference type="GO" id="GO:0009897">
    <property type="term" value="C:external side of plasma membrane"/>
    <property type="evidence" value="ECO:0000314"/>
    <property type="project" value="BHF-UCL"/>
</dbReference>
<dbReference type="GO" id="GO:0005615">
    <property type="term" value="C:extracellular space"/>
    <property type="evidence" value="ECO:0000314"/>
    <property type="project" value="BHF-UCL"/>
</dbReference>
<dbReference type="GO" id="GO:0016020">
    <property type="term" value="C:membrane"/>
    <property type="evidence" value="ECO:0000304"/>
    <property type="project" value="ProtInc"/>
</dbReference>
<dbReference type="GO" id="GO:0005886">
    <property type="term" value="C:plasma membrane"/>
    <property type="evidence" value="ECO:0000318"/>
    <property type="project" value="GO_Central"/>
</dbReference>
<dbReference type="GO" id="GO:1905286">
    <property type="term" value="C:serine-type peptidase complex"/>
    <property type="evidence" value="ECO:0000353"/>
    <property type="project" value="BHF-UCL"/>
</dbReference>
<dbReference type="GO" id="GO:0004896">
    <property type="term" value="F:cytokine receptor activity"/>
    <property type="evidence" value="ECO:0000318"/>
    <property type="project" value="GO_Central"/>
</dbReference>
<dbReference type="GO" id="GO:0005543">
    <property type="term" value="F:phospholipid binding"/>
    <property type="evidence" value="ECO:0000314"/>
    <property type="project" value="BHF-UCL"/>
</dbReference>
<dbReference type="GO" id="GO:0002020">
    <property type="term" value="F:protease binding"/>
    <property type="evidence" value="ECO:0000353"/>
    <property type="project" value="BHF-UCL"/>
</dbReference>
<dbReference type="GO" id="GO:0002543">
    <property type="term" value="P:activation of blood coagulation via clotting cascade"/>
    <property type="evidence" value="ECO:0000314"/>
    <property type="project" value="BHF-UCL"/>
</dbReference>
<dbReference type="GO" id="GO:0002541">
    <property type="term" value="P:activation of plasma proteins involved in acute inflammatory response"/>
    <property type="evidence" value="ECO:0000314"/>
    <property type="project" value="BHF-UCL"/>
</dbReference>
<dbReference type="GO" id="GO:0007596">
    <property type="term" value="P:blood coagulation"/>
    <property type="evidence" value="ECO:0000314"/>
    <property type="project" value="BHF-UCL"/>
</dbReference>
<dbReference type="GO" id="GO:0019221">
    <property type="term" value="P:cytokine-mediated signaling pathway"/>
    <property type="evidence" value="ECO:0000318"/>
    <property type="project" value="GO_Central"/>
</dbReference>
<dbReference type="GO" id="GO:0045766">
    <property type="term" value="P:positive regulation of angiogenesis"/>
    <property type="evidence" value="ECO:0000314"/>
    <property type="project" value="BHF-UCL"/>
</dbReference>
<dbReference type="GO" id="GO:0030335">
    <property type="term" value="P:positive regulation of cell migration"/>
    <property type="evidence" value="ECO:0000304"/>
    <property type="project" value="BHF-UCL"/>
</dbReference>
<dbReference type="GO" id="GO:2000353">
    <property type="term" value="P:positive regulation of endothelial cell apoptotic process"/>
    <property type="evidence" value="ECO:0000314"/>
    <property type="project" value="BHF-UCL"/>
</dbReference>
<dbReference type="GO" id="GO:0001938">
    <property type="term" value="P:positive regulation of endothelial cell proliferation"/>
    <property type="evidence" value="ECO:0000314"/>
    <property type="project" value="BHF-UCL"/>
</dbReference>
<dbReference type="GO" id="GO:0010628">
    <property type="term" value="P:positive regulation of gene expression"/>
    <property type="evidence" value="ECO:0000315"/>
    <property type="project" value="ARUK-UCL"/>
</dbReference>
<dbReference type="GO" id="GO:0032757">
    <property type="term" value="P:positive regulation of interleukin-8 production"/>
    <property type="evidence" value="ECO:0000315"/>
    <property type="project" value="ARUK-UCL"/>
</dbReference>
<dbReference type="GO" id="GO:0010641">
    <property type="term" value="P:positive regulation of platelet-derived growth factor receptor signaling pathway"/>
    <property type="evidence" value="ECO:0000314"/>
    <property type="project" value="BHF-UCL"/>
</dbReference>
<dbReference type="GO" id="GO:0050927">
    <property type="term" value="P:positive regulation of positive chemotaxis"/>
    <property type="evidence" value="ECO:0000314"/>
    <property type="project" value="BHF-UCL"/>
</dbReference>
<dbReference type="GO" id="GO:0032008">
    <property type="term" value="P:positive regulation of TOR signaling"/>
    <property type="evidence" value="ECO:0000315"/>
    <property type="project" value="BHF-UCL"/>
</dbReference>
<dbReference type="GO" id="GO:0016485">
    <property type="term" value="P:protein processing"/>
    <property type="evidence" value="ECO:0000314"/>
    <property type="project" value="BHF-UCL"/>
</dbReference>
<dbReference type="FunFam" id="2.60.40.10:FF:000746">
    <property type="entry name" value="Tissue factor"/>
    <property type="match status" value="1"/>
</dbReference>
<dbReference type="Gene3D" id="2.60.40.10">
    <property type="entry name" value="Immunoglobulins"/>
    <property type="match status" value="2"/>
</dbReference>
<dbReference type="InterPro" id="IPR003961">
    <property type="entry name" value="FN3_dom"/>
</dbReference>
<dbReference type="InterPro" id="IPR036116">
    <property type="entry name" value="FN3_sf"/>
</dbReference>
<dbReference type="InterPro" id="IPR013783">
    <property type="entry name" value="Ig-like_fold"/>
</dbReference>
<dbReference type="InterPro" id="IPR015373">
    <property type="entry name" value="Interferon/interleukin_rcp_dom"/>
</dbReference>
<dbReference type="InterPro" id="IPR001187">
    <property type="entry name" value="Tissue_factor"/>
</dbReference>
<dbReference type="InterPro" id="IPR030472">
    <property type="entry name" value="Tissue_Factor_CS"/>
</dbReference>
<dbReference type="InterPro" id="IPR050650">
    <property type="entry name" value="Type-II_Cytokine-TF_Rcpt"/>
</dbReference>
<dbReference type="PANTHER" id="PTHR20859">
    <property type="entry name" value="INTERFERON/INTERLEUKIN RECEPTOR"/>
    <property type="match status" value="1"/>
</dbReference>
<dbReference type="PANTHER" id="PTHR20859:SF22">
    <property type="entry name" value="TISSUE FACTOR"/>
    <property type="match status" value="1"/>
</dbReference>
<dbReference type="Pfam" id="PF09294">
    <property type="entry name" value="Interfer-bind"/>
    <property type="match status" value="1"/>
</dbReference>
<dbReference type="Pfam" id="PF01108">
    <property type="entry name" value="Tissue_fac"/>
    <property type="match status" value="1"/>
</dbReference>
<dbReference type="PIRSF" id="PIRSF002498">
    <property type="entry name" value="Tissue_factor_3"/>
    <property type="match status" value="1"/>
</dbReference>
<dbReference type="PRINTS" id="PR00346">
    <property type="entry name" value="TISSUEFACTOR"/>
</dbReference>
<dbReference type="SUPFAM" id="SSF49265">
    <property type="entry name" value="Fibronectin type III"/>
    <property type="match status" value="2"/>
</dbReference>
<dbReference type="PROSITE" id="PS00621">
    <property type="entry name" value="TISSUE_FACTOR"/>
    <property type="match status" value="1"/>
</dbReference>
<comment type="function">
    <text evidence="2 5">Initiates blood coagulation by forming a complex with circulating factor VII or VIIa. The [TF:VIIa] complex activates factors IX or X by specific limited proteolysis. TF plays a role in normal hemostasis by initiating the cell-surface assembly and propagation of the coagulation protease cascade.</text>
</comment>
<comment type="subunit">
    <text evidence="4 7 8">Interacts with HSPE; the interaction, inhibited by heparin, promotes the generation of activated factor X and activates coagulation in the presence of activated factor VII.</text>
</comment>
<comment type="interaction">
    <interactant intactId="EBI-1040727">
        <id>P13726</id>
    </interactant>
    <interactant intactId="EBI-4303189">
        <id>P55085</id>
        <label>F2RL1</label>
    </interactant>
    <organismsDiffer>false</organismsDiffer>
    <experiments>2</experiments>
</comment>
<comment type="interaction">
    <interactant intactId="EBI-1040727">
        <id>P13726</id>
    </interactant>
    <interactant intactId="EBI-355972">
        <id>P08709</id>
        <label>F7</label>
    </interactant>
    <organismsDiffer>false</organismsDiffer>
    <experiments>7</experiments>
</comment>
<comment type="interaction">
    <interactant intactId="EBI-1040727">
        <id>P13726</id>
    </interactant>
    <interactant intactId="EBI-744820">
        <id>Q9UM19</id>
        <label>HPCAL4</label>
    </interactant>
    <organismsDiffer>false</organismsDiffer>
    <experiments>3</experiments>
</comment>
<comment type="interaction">
    <interactant intactId="EBI-1040727">
        <id>P13726</id>
    </interactant>
    <interactant intactId="EBI-6138615">
        <id>Q92544</id>
        <label>TM9SF4</label>
    </interactant>
    <organismsDiffer>false</organismsDiffer>
    <experiments>2</experiments>
</comment>
<comment type="subcellular location">
    <molecule>Isoform 1</molecule>
    <subcellularLocation>
        <location evidence="2">Membrane</location>
        <topology evidence="2">Single-pass type I membrane protein</topology>
    </subcellularLocation>
</comment>
<comment type="subcellular location">
    <molecule>Isoform 2</molecule>
    <subcellularLocation>
        <location evidence="2">Secreted</location>
    </subcellularLocation>
</comment>
<comment type="alternative products">
    <event type="alternative splicing"/>
    <isoform>
        <id>P13726-1</id>
        <name>1</name>
        <name>flTF</name>
        <sequence type="displayed"/>
    </isoform>
    <isoform>
        <id>P13726-2</id>
        <name>2</name>
        <name>asHTF</name>
        <sequence type="described" ref="VSP_041896 VSP_041897"/>
    </isoform>
    <text>Additional isoforms may exist.</text>
</comment>
<comment type="tissue specificity">
    <text evidence="2">Lung, placenta and pancreas.</text>
</comment>
<comment type="induction">
    <text evidence="3">TF expression is highly dependent upon cell type. TF can also be induced by the inflammatory mediators interleukin 1 and TNF-alpha, as well as by endotoxin, to appear on monocytes and vascular endothelial cells as a component of cellular immune response.</text>
</comment>
<comment type="similarity">
    <text evidence="11">Belongs to the tissue factor family.</text>
</comment>
<comment type="online information" name="Wikipedia">
    <link uri="https://en.wikipedia.org/wiki/Tissue_factor"/>
    <text>Tissue factor entry</text>
</comment>